<feature type="chain" id="PRO_0000195285" description="Glucose-1-phosphate adenylyltransferase">
    <location>
        <begin position="1"/>
        <end position="414"/>
    </location>
</feature>
<feature type="binding site" evidence="1">
    <location>
        <position position="99"/>
    </location>
    <ligand>
        <name>alpha-D-glucose 1-phosphate</name>
        <dbReference type="ChEBI" id="CHEBI:58601"/>
    </ligand>
</feature>
<feature type="binding site" evidence="1">
    <location>
        <position position="164"/>
    </location>
    <ligand>
        <name>alpha-D-glucose 1-phosphate</name>
        <dbReference type="ChEBI" id="CHEBI:58601"/>
    </ligand>
</feature>
<feature type="binding site" evidence="1">
    <location>
        <begin position="181"/>
        <end position="182"/>
    </location>
    <ligand>
        <name>alpha-D-glucose 1-phosphate</name>
        <dbReference type="ChEBI" id="CHEBI:58601"/>
    </ligand>
</feature>
<feature type="binding site" evidence="1">
    <location>
        <position position="199"/>
    </location>
    <ligand>
        <name>alpha-D-glucose 1-phosphate</name>
        <dbReference type="ChEBI" id="CHEBI:58601"/>
    </ligand>
</feature>
<protein>
    <recommendedName>
        <fullName evidence="1">Glucose-1-phosphate adenylyltransferase</fullName>
        <ecNumber evidence="1">2.7.7.27</ecNumber>
    </recommendedName>
    <alternativeName>
        <fullName evidence="1">ADP-glucose pyrophosphorylase</fullName>
        <shortName evidence="1">ADPGlc PPase</shortName>
    </alternativeName>
    <alternativeName>
        <fullName evidence="1">ADP-glucose synthase</fullName>
    </alternativeName>
</protein>
<proteinExistence type="inferred from homology"/>
<comment type="function">
    <text evidence="1">Involved in the biosynthesis of ADP-glucose, a building block required for the elongation reactions to produce glycogen. Catalyzes the reaction between ATP and alpha-D-glucose 1-phosphate (G1P) to produce pyrophosphate and ADP-Glc.</text>
</comment>
<comment type="catalytic activity">
    <reaction evidence="1">
        <text>alpha-D-glucose 1-phosphate + ATP + H(+) = ADP-alpha-D-glucose + diphosphate</text>
        <dbReference type="Rhea" id="RHEA:12120"/>
        <dbReference type="ChEBI" id="CHEBI:15378"/>
        <dbReference type="ChEBI" id="CHEBI:30616"/>
        <dbReference type="ChEBI" id="CHEBI:33019"/>
        <dbReference type="ChEBI" id="CHEBI:57498"/>
        <dbReference type="ChEBI" id="CHEBI:58601"/>
        <dbReference type="EC" id="2.7.7.27"/>
    </reaction>
</comment>
<comment type="pathway">
    <text evidence="1">Glycan biosynthesis; glycogen biosynthesis.</text>
</comment>
<comment type="subunit">
    <text evidence="1">Homotetramer.</text>
</comment>
<comment type="similarity">
    <text evidence="1">Belongs to the bacterial/plant glucose-1-phosphate adenylyltransferase family.</text>
</comment>
<keyword id="KW-0067">ATP-binding</keyword>
<keyword id="KW-0119">Carbohydrate metabolism</keyword>
<keyword id="KW-0320">Glycogen biosynthesis</keyword>
<keyword id="KW-0321">Glycogen metabolism</keyword>
<keyword id="KW-0547">Nucleotide-binding</keyword>
<keyword id="KW-0548">Nucleotidyltransferase</keyword>
<keyword id="KW-1185">Reference proteome</keyword>
<keyword id="KW-0808">Transferase</keyword>
<evidence type="ECO:0000255" key="1">
    <source>
        <dbReference type="HAMAP-Rule" id="MF_00624"/>
    </source>
</evidence>
<accession>Q8G5Y5</accession>
<dbReference type="EC" id="2.7.7.27" evidence="1"/>
<dbReference type="EMBL" id="AE014295">
    <property type="protein sequence ID" value="AAN24679.1"/>
    <property type="molecule type" value="Genomic_DNA"/>
</dbReference>
<dbReference type="RefSeq" id="NP_696043.1">
    <property type="nucleotide sequence ID" value="NC_004307.2"/>
</dbReference>
<dbReference type="RefSeq" id="WP_007052151.1">
    <property type="nucleotide sequence ID" value="NC_004307.2"/>
</dbReference>
<dbReference type="SMR" id="Q8G5Y5"/>
<dbReference type="STRING" id="206672.BL0866"/>
<dbReference type="EnsemblBacteria" id="AAN24679">
    <property type="protein sequence ID" value="AAN24679"/>
    <property type="gene ID" value="BL0866"/>
</dbReference>
<dbReference type="GeneID" id="69577993"/>
<dbReference type="KEGG" id="blo:BL0866"/>
<dbReference type="PATRIC" id="fig|206672.9.peg.560"/>
<dbReference type="HOGENOM" id="CLU_029499_14_1_11"/>
<dbReference type="OrthoDB" id="9801810at2"/>
<dbReference type="PhylomeDB" id="Q8G5Y5"/>
<dbReference type="UniPathway" id="UPA00164"/>
<dbReference type="Proteomes" id="UP000000439">
    <property type="component" value="Chromosome"/>
</dbReference>
<dbReference type="GO" id="GO:0005524">
    <property type="term" value="F:ATP binding"/>
    <property type="evidence" value="ECO:0007669"/>
    <property type="project" value="UniProtKB-KW"/>
</dbReference>
<dbReference type="GO" id="GO:0008878">
    <property type="term" value="F:glucose-1-phosphate adenylyltransferase activity"/>
    <property type="evidence" value="ECO:0007669"/>
    <property type="project" value="UniProtKB-UniRule"/>
</dbReference>
<dbReference type="GO" id="GO:0005978">
    <property type="term" value="P:glycogen biosynthetic process"/>
    <property type="evidence" value="ECO:0007669"/>
    <property type="project" value="UniProtKB-UniRule"/>
</dbReference>
<dbReference type="CDD" id="cd02508">
    <property type="entry name" value="ADP_Glucose_PP"/>
    <property type="match status" value="1"/>
</dbReference>
<dbReference type="CDD" id="cd04651">
    <property type="entry name" value="LbH_G1P_AT_C"/>
    <property type="match status" value="1"/>
</dbReference>
<dbReference type="Gene3D" id="2.160.10.10">
    <property type="entry name" value="Hexapeptide repeat proteins"/>
    <property type="match status" value="1"/>
</dbReference>
<dbReference type="Gene3D" id="3.90.550.10">
    <property type="entry name" value="Spore Coat Polysaccharide Biosynthesis Protein SpsA, Chain A"/>
    <property type="match status" value="1"/>
</dbReference>
<dbReference type="HAMAP" id="MF_00624">
    <property type="entry name" value="GlgC"/>
    <property type="match status" value="1"/>
</dbReference>
<dbReference type="InterPro" id="IPR011831">
    <property type="entry name" value="ADP-Glc_PPase"/>
</dbReference>
<dbReference type="InterPro" id="IPR005836">
    <property type="entry name" value="ADP_Glu_pyroP_CS"/>
</dbReference>
<dbReference type="InterPro" id="IPR023049">
    <property type="entry name" value="GlgC_bac"/>
</dbReference>
<dbReference type="InterPro" id="IPR056818">
    <property type="entry name" value="GlmU/GlgC-like_hexapep"/>
</dbReference>
<dbReference type="InterPro" id="IPR005835">
    <property type="entry name" value="NTP_transferase_dom"/>
</dbReference>
<dbReference type="InterPro" id="IPR029044">
    <property type="entry name" value="Nucleotide-diphossugar_trans"/>
</dbReference>
<dbReference type="InterPro" id="IPR011004">
    <property type="entry name" value="Trimer_LpxA-like_sf"/>
</dbReference>
<dbReference type="NCBIfam" id="TIGR02091">
    <property type="entry name" value="glgC"/>
    <property type="match status" value="1"/>
</dbReference>
<dbReference type="NCBIfam" id="NF001947">
    <property type="entry name" value="PRK00725.1"/>
    <property type="match status" value="1"/>
</dbReference>
<dbReference type="NCBIfam" id="NF002023">
    <property type="entry name" value="PRK00844.1"/>
    <property type="match status" value="1"/>
</dbReference>
<dbReference type="PANTHER" id="PTHR43523:SF2">
    <property type="entry name" value="GLUCOSE-1-PHOSPHATE ADENYLYLTRANSFERASE"/>
    <property type="match status" value="1"/>
</dbReference>
<dbReference type="PANTHER" id="PTHR43523">
    <property type="entry name" value="GLUCOSE-1-PHOSPHATE ADENYLYLTRANSFERASE-RELATED"/>
    <property type="match status" value="1"/>
</dbReference>
<dbReference type="Pfam" id="PF24894">
    <property type="entry name" value="Hexapep_GlmU"/>
    <property type="match status" value="1"/>
</dbReference>
<dbReference type="Pfam" id="PF00483">
    <property type="entry name" value="NTP_transferase"/>
    <property type="match status" value="1"/>
</dbReference>
<dbReference type="SUPFAM" id="SSF53448">
    <property type="entry name" value="Nucleotide-diphospho-sugar transferases"/>
    <property type="match status" value="1"/>
</dbReference>
<dbReference type="SUPFAM" id="SSF51161">
    <property type="entry name" value="Trimeric LpxA-like enzymes"/>
    <property type="match status" value="1"/>
</dbReference>
<dbReference type="PROSITE" id="PS00808">
    <property type="entry name" value="ADP_GLC_PYROPHOSPH_1"/>
    <property type="match status" value="1"/>
</dbReference>
<dbReference type="PROSITE" id="PS00809">
    <property type="entry name" value="ADP_GLC_PYROPHOSPH_2"/>
    <property type="match status" value="1"/>
</dbReference>
<gene>
    <name evidence="1" type="primary">glgC</name>
    <name type="ordered locus">BL0866</name>
</gene>
<reference key="1">
    <citation type="journal article" date="2002" name="Proc. Natl. Acad. Sci. U.S.A.">
        <title>The genome sequence of Bifidobacterium longum reflects its adaptation to the human gastrointestinal tract.</title>
        <authorList>
            <person name="Schell M.A."/>
            <person name="Karmirantzou M."/>
            <person name="Snel B."/>
            <person name="Vilanova D."/>
            <person name="Berger B."/>
            <person name="Pessi G."/>
            <person name="Zwahlen M.-C."/>
            <person name="Desiere F."/>
            <person name="Bork P."/>
            <person name="Delley M."/>
            <person name="Pridmore R.D."/>
            <person name="Arigoni F."/>
        </authorList>
    </citation>
    <scope>NUCLEOTIDE SEQUENCE [LARGE SCALE GENOMIC DNA]</scope>
    <source>
        <strain>NCC 2705</strain>
    </source>
</reference>
<name>GLGC_BIFLO</name>
<sequence length="414" mass="45832">MTKNPKILSIVLAGGEGTRLMPLTRDRAKPAVPFGGVYRLIDFPLSNLVNSGYRQVVVLTQYKSHSLDRHISQVWRFSPLLGSYVSPVPAQQRLGKHWYLGSADAIYQTINIIEDVQPDIVVIVGADHVYRMDFEQMVQQHIESGAEFTVAGIRQPIEESNQFGVIEVDPDHPNMIKNFQEKPPTTTGLPDNPNQILASMGNYVANTKALFEALALDEKAADTKHDMGGDIAPYFASRNEAGVYDFNSNEIPGSTATDHAYWRDVGTIKQFYDAHMDLIAYVPEFNLYNQDWPIYTMSGNLPPAKFVHAGRDRLGHATDSIVSPGVIVSGGEVHHSVLSPNVRIHSWAQIVDSVLFDGVVINRRARVYKAILDKNVVLTENSTVGIDTEHDLARGFTVTPDGITVVPKNTIVDD</sequence>
<organism>
    <name type="scientific">Bifidobacterium longum (strain NCC 2705)</name>
    <dbReference type="NCBI Taxonomy" id="206672"/>
    <lineage>
        <taxon>Bacteria</taxon>
        <taxon>Bacillati</taxon>
        <taxon>Actinomycetota</taxon>
        <taxon>Actinomycetes</taxon>
        <taxon>Bifidobacteriales</taxon>
        <taxon>Bifidobacteriaceae</taxon>
        <taxon>Bifidobacterium</taxon>
    </lineage>
</organism>